<feature type="chain" id="PRO_0000060044" description="Histidine/lysine/arginine/ornithine transport system permease protein HisM">
    <location>
        <begin position="1"/>
        <end position="238"/>
    </location>
</feature>
<feature type="topological domain" description="Periplasmic" evidence="5">
    <location>
        <begin position="1"/>
        <end position="26"/>
    </location>
</feature>
<feature type="transmembrane region" description="Helical" evidence="2">
    <location>
        <begin position="27"/>
        <end position="47"/>
    </location>
</feature>
<feature type="topological domain" description="Cytoplasmic" evidence="5">
    <location>
        <begin position="48"/>
        <end position="58"/>
    </location>
</feature>
<feature type="transmembrane region" description="Helical" evidence="2">
    <location>
        <begin position="59"/>
        <end position="79"/>
    </location>
</feature>
<feature type="topological domain" description="Periplasmic" evidence="5">
    <location>
        <begin position="80"/>
        <end position="104"/>
    </location>
</feature>
<feature type="transmembrane region" description="Helical" evidence="2">
    <location>
        <begin position="105"/>
        <end position="125"/>
    </location>
</feature>
<feature type="topological domain" description="Cytoplasmic" evidence="5">
    <location>
        <begin position="126"/>
        <end position="157"/>
    </location>
</feature>
<feature type="transmembrane region" description="Helical" evidence="2">
    <location>
        <begin position="158"/>
        <end position="178"/>
    </location>
</feature>
<feature type="topological domain" description="Periplasmic" evidence="5">
    <location>
        <begin position="179"/>
        <end position="199"/>
    </location>
</feature>
<feature type="transmembrane region" description="Helical" evidence="2">
    <location>
        <begin position="200"/>
        <end position="220"/>
    </location>
</feature>
<feature type="topological domain" description="Cytoplasmic" evidence="4">
    <location>
        <begin position="221"/>
        <end position="238"/>
    </location>
</feature>
<feature type="domain" description="ABC transmembrane type-1" evidence="3">
    <location>
        <begin position="23"/>
        <end position="221"/>
    </location>
</feature>
<evidence type="ECO:0000250" key="1">
    <source>
        <dbReference type="UniProtKB" id="P0A2I7"/>
    </source>
</evidence>
<evidence type="ECO:0000255" key="2"/>
<evidence type="ECO:0000255" key="3">
    <source>
        <dbReference type="PROSITE-ProRule" id="PRU00441"/>
    </source>
</evidence>
<evidence type="ECO:0000269" key="4">
    <source>
    </source>
</evidence>
<evidence type="ECO:0000305" key="5"/>
<proteinExistence type="evidence at protein level"/>
<keyword id="KW-0029">Amino-acid transport</keyword>
<keyword id="KW-0997">Cell inner membrane</keyword>
<keyword id="KW-1003">Cell membrane</keyword>
<keyword id="KW-0472">Membrane</keyword>
<keyword id="KW-1185">Reference proteome</keyword>
<keyword id="KW-0812">Transmembrane</keyword>
<keyword id="KW-1133">Transmembrane helix</keyword>
<keyword id="KW-0813">Transport</keyword>
<reference key="1">
    <citation type="journal article" date="1997" name="DNA Res.">
        <title>Construction of a contiguous 874-kb sequence of the Escherichia coli-K12 genome corresponding to 50.0-68.8 min on the linkage map and analysis of its sequence features.</title>
        <authorList>
            <person name="Yamamoto Y."/>
            <person name="Aiba H."/>
            <person name="Baba T."/>
            <person name="Hayashi K."/>
            <person name="Inada T."/>
            <person name="Isono K."/>
            <person name="Itoh T."/>
            <person name="Kimura S."/>
            <person name="Kitagawa M."/>
            <person name="Makino K."/>
            <person name="Miki T."/>
            <person name="Mitsuhashi N."/>
            <person name="Mizobuchi K."/>
            <person name="Mori H."/>
            <person name="Nakade S."/>
            <person name="Nakamura Y."/>
            <person name="Nashimoto H."/>
            <person name="Oshima T."/>
            <person name="Oyama S."/>
            <person name="Saito N."/>
            <person name="Sampei G."/>
            <person name="Satoh Y."/>
            <person name="Sivasundaram S."/>
            <person name="Tagami H."/>
            <person name="Takahashi H."/>
            <person name="Takeda J."/>
            <person name="Takemoto K."/>
            <person name="Uehara K."/>
            <person name="Wada C."/>
            <person name="Yamagata S."/>
            <person name="Horiuchi T."/>
        </authorList>
    </citation>
    <scope>NUCLEOTIDE SEQUENCE [LARGE SCALE GENOMIC DNA]</scope>
    <source>
        <strain>K12 / W3110 / ATCC 27325 / DSM 5911</strain>
    </source>
</reference>
<reference key="2">
    <citation type="journal article" date="1997" name="Science">
        <title>The complete genome sequence of Escherichia coli K-12.</title>
        <authorList>
            <person name="Blattner F.R."/>
            <person name="Plunkett G. III"/>
            <person name="Bloch C.A."/>
            <person name="Perna N.T."/>
            <person name="Burland V."/>
            <person name="Riley M."/>
            <person name="Collado-Vides J."/>
            <person name="Glasner J.D."/>
            <person name="Rode C.K."/>
            <person name="Mayhew G.F."/>
            <person name="Gregor J."/>
            <person name="Davis N.W."/>
            <person name="Kirkpatrick H.A."/>
            <person name="Goeden M.A."/>
            <person name="Rose D.J."/>
            <person name="Mau B."/>
            <person name="Shao Y."/>
        </authorList>
    </citation>
    <scope>NUCLEOTIDE SEQUENCE [LARGE SCALE GENOMIC DNA]</scope>
    <source>
        <strain>K12 / MG1655 / ATCC 47076</strain>
    </source>
</reference>
<reference key="3">
    <citation type="journal article" date="2006" name="Mol. Syst. Biol.">
        <title>Highly accurate genome sequences of Escherichia coli K-12 strains MG1655 and W3110.</title>
        <authorList>
            <person name="Hayashi K."/>
            <person name="Morooka N."/>
            <person name="Yamamoto Y."/>
            <person name="Fujita K."/>
            <person name="Isono K."/>
            <person name="Choi S."/>
            <person name="Ohtsubo E."/>
            <person name="Baba T."/>
            <person name="Wanner B.L."/>
            <person name="Mori H."/>
            <person name="Horiuchi T."/>
        </authorList>
    </citation>
    <scope>NUCLEOTIDE SEQUENCE [LARGE SCALE GENOMIC DNA]</scope>
    <source>
        <strain>K12 / W3110 / ATCC 27325 / DSM 5911</strain>
    </source>
</reference>
<reference key="4">
    <citation type="submission" date="1996-01" db="EMBL/GenBank/DDBJ databases">
        <authorList>
            <person name="Joshi A."/>
            <person name="Ames G.F.-L."/>
        </authorList>
    </citation>
    <scope>NUCLEOTIDE SEQUENCE [GENOMIC DNA] OF 1-93</scope>
    <source>
        <strain>K12</strain>
    </source>
</reference>
<reference key="5">
    <citation type="journal article" date="1987" name="Nucleic Acids Res.">
        <title>Sequence of the complete P protein gene and part of the M protein gene from the histidine transport operon of Escherichia coli compared to that of Salmonella typhimurium.</title>
        <authorList>
            <person name="Kraft R."/>
            <person name="Leinwand L.A."/>
        </authorList>
    </citation>
    <scope>NUCLEOTIDE SEQUENCE [GENOMIC DNA] OF 92-238</scope>
    <source>
        <strain>K12</strain>
    </source>
</reference>
<reference key="6">
    <citation type="journal article" date="2005" name="Science">
        <title>Global topology analysis of the Escherichia coli inner membrane proteome.</title>
        <authorList>
            <person name="Daley D.O."/>
            <person name="Rapp M."/>
            <person name="Granseth E."/>
            <person name="Melen K."/>
            <person name="Drew D."/>
            <person name="von Heijne G."/>
        </authorList>
    </citation>
    <scope>SUBCELLULAR LOCATION</scope>
    <scope>TOPOLOGY [LARGE SCALE ANALYSIS]</scope>
    <source>
        <strain>K12 / MG1655 / ATCC 47076</strain>
    </source>
</reference>
<sequence length="238" mass="26870">MIEILHEYWKPLLWTDGYRFTGVAITLWLLILSVVIGGVLALFLAIGRVSSNKYIQFPIWLFTYIFRGTPLYVQLLVFYSGMYTLEIVKGTEFLNAFFRSGLNCTVLALTLNTCAYTTEIFAGAIRSVPHGEIEAARAYGFSTFKMYRCIILPSALRIALPAYSNEVILMLHSTALAFTATVPDLLKIARDINAATYQPFTAFGIAAVLYLIISYVLISLFRRAEKRWLQHVKPSSTH</sequence>
<dbReference type="EMBL" id="U00096">
    <property type="protein sequence ID" value="AAC75367.1"/>
    <property type="molecule type" value="Genomic_DNA"/>
</dbReference>
<dbReference type="EMBL" id="AP009048">
    <property type="protein sequence ID" value="BAA16153.1"/>
    <property type="molecule type" value="Genomic_DNA"/>
</dbReference>
<dbReference type="EMBL" id="U47027">
    <property type="protein sequence ID" value="AAA85771.1"/>
    <property type="molecule type" value="Genomic_DNA"/>
</dbReference>
<dbReference type="EMBL" id="Y00455">
    <property type="protein sequence ID" value="CAA68510.1"/>
    <property type="molecule type" value="Genomic_DNA"/>
</dbReference>
<dbReference type="PIR" id="A65003">
    <property type="entry name" value="B27835"/>
</dbReference>
<dbReference type="RefSeq" id="NP_416810.1">
    <property type="nucleotide sequence ID" value="NC_000913.3"/>
</dbReference>
<dbReference type="RefSeq" id="WP_000569958.1">
    <property type="nucleotide sequence ID" value="NZ_STEB01000008.1"/>
</dbReference>
<dbReference type="SMR" id="P0AEU3"/>
<dbReference type="BioGRID" id="4260522">
    <property type="interactions" value="5"/>
</dbReference>
<dbReference type="ComplexPortal" id="CPX-4328">
    <property type="entry name" value="Histidine ABC transporter complex"/>
</dbReference>
<dbReference type="ComplexPortal" id="CPX-4329">
    <property type="entry name" value="Polar amino acid ABC transporter complex"/>
</dbReference>
<dbReference type="FunCoup" id="P0AEU3">
    <property type="interactions" value="225"/>
</dbReference>
<dbReference type="STRING" id="511145.b2307"/>
<dbReference type="TCDB" id="3.A.1.3.29">
    <property type="family name" value="the atp-binding cassette (abc) superfamily"/>
</dbReference>
<dbReference type="PaxDb" id="511145-b2307"/>
<dbReference type="EnsemblBacteria" id="AAC75367">
    <property type="protein sequence ID" value="AAC75367"/>
    <property type="gene ID" value="b2307"/>
</dbReference>
<dbReference type="GeneID" id="946790"/>
<dbReference type="KEGG" id="ecj:JW2304"/>
<dbReference type="KEGG" id="eco:b2307"/>
<dbReference type="KEGG" id="ecoc:C3026_12865"/>
<dbReference type="PATRIC" id="fig|1411691.4.peg.4427"/>
<dbReference type="EchoBASE" id="EB0007"/>
<dbReference type="eggNOG" id="COG4160">
    <property type="taxonomic scope" value="Bacteria"/>
</dbReference>
<dbReference type="HOGENOM" id="CLU_019602_1_4_6"/>
<dbReference type="InParanoid" id="P0AEU3"/>
<dbReference type="OMA" id="QLVPMWA"/>
<dbReference type="OrthoDB" id="4404959at2"/>
<dbReference type="PhylomeDB" id="P0AEU3"/>
<dbReference type="BioCyc" id="EcoCyc:HISM-MONOMER"/>
<dbReference type="PRO" id="PR:P0AEU3"/>
<dbReference type="Proteomes" id="UP000000625">
    <property type="component" value="Chromosome"/>
</dbReference>
<dbReference type="GO" id="GO:0055052">
    <property type="term" value="C:ATP-binding cassette (ABC) transporter complex, substrate-binding subunit-containing"/>
    <property type="evidence" value="ECO:0000303"/>
    <property type="project" value="ComplexPortal"/>
</dbReference>
<dbReference type="GO" id="GO:0016020">
    <property type="term" value="C:membrane"/>
    <property type="evidence" value="ECO:0000303"/>
    <property type="project" value="ComplexPortal"/>
</dbReference>
<dbReference type="GO" id="GO:0005886">
    <property type="term" value="C:plasma membrane"/>
    <property type="evidence" value="ECO:0000314"/>
    <property type="project" value="EcoCyc"/>
</dbReference>
<dbReference type="GO" id="GO:0022857">
    <property type="term" value="F:transmembrane transporter activity"/>
    <property type="evidence" value="ECO:0007669"/>
    <property type="project" value="InterPro"/>
</dbReference>
<dbReference type="GO" id="GO:0089718">
    <property type="term" value="P:amino acid import across plasma membrane"/>
    <property type="evidence" value="ECO:0000303"/>
    <property type="project" value="ComplexPortal"/>
</dbReference>
<dbReference type="GO" id="GO:0006865">
    <property type="term" value="P:amino acid transport"/>
    <property type="evidence" value="ECO:0000318"/>
    <property type="project" value="GO_Central"/>
</dbReference>
<dbReference type="GO" id="GO:1903810">
    <property type="term" value="P:L-histidine import across plasma membrane"/>
    <property type="evidence" value="ECO:0000303"/>
    <property type="project" value="ComplexPortal"/>
</dbReference>
<dbReference type="CDD" id="cd06261">
    <property type="entry name" value="TM_PBP2"/>
    <property type="match status" value="1"/>
</dbReference>
<dbReference type="FunFam" id="1.10.3720.10:FF:000012">
    <property type="entry name" value="Histidine ABC transporter permease HisM"/>
    <property type="match status" value="1"/>
</dbReference>
<dbReference type="Gene3D" id="1.10.3720.10">
    <property type="entry name" value="MetI-like"/>
    <property type="match status" value="1"/>
</dbReference>
<dbReference type="InterPro" id="IPR051322">
    <property type="entry name" value="AA_ABC_Transporter_Permease"/>
</dbReference>
<dbReference type="InterPro" id="IPR010065">
    <property type="entry name" value="AA_ABC_transptr_permease_3TM"/>
</dbReference>
<dbReference type="InterPro" id="IPR000515">
    <property type="entry name" value="MetI-like"/>
</dbReference>
<dbReference type="InterPro" id="IPR035906">
    <property type="entry name" value="MetI-like_sf"/>
</dbReference>
<dbReference type="NCBIfam" id="TIGR01726">
    <property type="entry name" value="HEQRo_perm_3TM"/>
    <property type="match status" value="1"/>
</dbReference>
<dbReference type="NCBIfam" id="NF011651">
    <property type="entry name" value="PRK15069.1"/>
    <property type="match status" value="1"/>
</dbReference>
<dbReference type="PANTHER" id="PTHR30450">
    <property type="entry name" value="ABC TRANSPORTER PERMEASE"/>
    <property type="match status" value="1"/>
</dbReference>
<dbReference type="PANTHER" id="PTHR30450:SF5">
    <property type="entry name" value="HISTIDINE TRANSPORT SYSTEM PERMEASE PROTEIN HISM"/>
    <property type="match status" value="1"/>
</dbReference>
<dbReference type="Pfam" id="PF00528">
    <property type="entry name" value="BPD_transp_1"/>
    <property type="match status" value="1"/>
</dbReference>
<dbReference type="SUPFAM" id="SSF161098">
    <property type="entry name" value="MetI-like"/>
    <property type="match status" value="1"/>
</dbReference>
<dbReference type="PROSITE" id="PS50928">
    <property type="entry name" value="ABC_TM1"/>
    <property type="match status" value="1"/>
</dbReference>
<protein>
    <recommendedName>
        <fullName evidence="5">Histidine/lysine/arginine/ornithine transport system permease protein HisM</fullName>
    </recommendedName>
</protein>
<organism>
    <name type="scientific">Escherichia coli (strain K12)</name>
    <dbReference type="NCBI Taxonomy" id="83333"/>
    <lineage>
        <taxon>Bacteria</taxon>
        <taxon>Pseudomonadati</taxon>
        <taxon>Pseudomonadota</taxon>
        <taxon>Gammaproteobacteria</taxon>
        <taxon>Enterobacterales</taxon>
        <taxon>Enterobacteriaceae</taxon>
        <taxon>Escherichia</taxon>
    </lineage>
</organism>
<comment type="function">
    <text evidence="1">Part of the ABC transporter complex HisPMQJ involved in histidine transport. Is also part of the ABC transporter complex HisPMQ-ArgT involved in lysine/arginine/ornithine transport. Probably responsible for the translocation of the substrate across the membrane.</text>
</comment>
<comment type="subunit">
    <text evidence="1">The HisPMQJ complex is composed of two ATP-binding proteins (HisP), two transmembrane proteins (HisM and HisQ) and a solute-binding protein (HisJ). The HisPMQ-ArgT complex is composed of two ATP-binding proteins (HisP), two transmembrane proteins (HisM and HisQ) and a solute-binding protein (ArgT).</text>
</comment>
<comment type="subcellular location">
    <subcellularLocation>
        <location evidence="4">Cell inner membrane</location>
        <topology evidence="2">Multi-pass membrane protein</topology>
    </subcellularLocation>
</comment>
<comment type="similarity">
    <text evidence="5">Belongs to the binding-protein-dependent transport system permease family. HisMQ subfamily.</text>
</comment>
<gene>
    <name type="primary">hisM</name>
    <name type="ordered locus">b2307</name>
    <name type="ordered locus">JW2304</name>
</gene>
<accession>P0AEU3</accession>
<accession>P20091</accession>
<accession>P76936</accession>
<name>HISM_ECOLI</name>